<comment type="function">
    <text evidence="1">This protein binds to 23S rRNA in the presence of protein L20.</text>
</comment>
<comment type="subunit">
    <text evidence="1">Part of the 50S ribosomal subunit. Contacts protein L20.</text>
</comment>
<comment type="similarity">
    <text evidence="1">Belongs to the bacterial ribosomal protein bL21 family.</text>
</comment>
<sequence>MFAVIKTGGKQYRVEPGMLLKVEKLPADVGETVEIEASLIKDDQGNIKTEGKVEAEVVEHGKHKKVLVFHFKRKKNYKKLNGHRQPYTLIKIKDIKA</sequence>
<name>RL21_PERMH</name>
<feature type="chain" id="PRO_1000166734" description="Large ribosomal subunit protein bL21">
    <location>
        <begin position="1"/>
        <end position="97"/>
    </location>
</feature>
<reference key="1">
    <citation type="journal article" date="2009" name="J. Bacteriol.">
        <title>Complete and draft genome sequences of six members of the Aquificales.</title>
        <authorList>
            <person name="Reysenbach A.-L."/>
            <person name="Hamamura N."/>
            <person name="Podar M."/>
            <person name="Griffiths E."/>
            <person name="Ferreira S."/>
            <person name="Hochstein R."/>
            <person name="Heidelberg J."/>
            <person name="Johnson J."/>
            <person name="Mead D."/>
            <person name="Pohorille A."/>
            <person name="Sarmiento M."/>
            <person name="Schweighofer K."/>
            <person name="Seshadri R."/>
            <person name="Voytek M.A."/>
        </authorList>
    </citation>
    <scope>NUCLEOTIDE SEQUENCE [LARGE SCALE GENOMIC DNA]</scope>
    <source>
        <strain>DSM 14350 / EX-H1</strain>
    </source>
</reference>
<accession>C0QT34</accession>
<gene>
    <name evidence="1" type="primary">rplU</name>
    <name type="ordered locus">PERMA_0051</name>
</gene>
<proteinExistence type="inferred from homology"/>
<organism>
    <name type="scientific">Persephonella marina (strain DSM 14350 / EX-H1)</name>
    <dbReference type="NCBI Taxonomy" id="123214"/>
    <lineage>
        <taxon>Bacteria</taxon>
        <taxon>Pseudomonadati</taxon>
        <taxon>Aquificota</taxon>
        <taxon>Aquificia</taxon>
        <taxon>Aquificales</taxon>
        <taxon>Hydrogenothermaceae</taxon>
        <taxon>Persephonella</taxon>
    </lineage>
</organism>
<dbReference type="EMBL" id="CP001230">
    <property type="protein sequence ID" value="ACO03946.1"/>
    <property type="molecule type" value="Genomic_DNA"/>
</dbReference>
<dbReference type="RefSeq" id="WP_012676185.1">
    <property type="nucleotide sequence ID" value="NC_012440.1"/>
</dbReference>
<dbReference type="SMR" id="C0QT34"/>
<dbReference type="STRING" id="123214.PERMA_0051"/>
<dbReference type="PaxDb" id="123214-PERMA_0051"/>
<dbReference type="KEGG" id="pmx:PERMA_0051"/>
<dbReference type="eggNOG" id="COG0261">
    <property type="taxonomic scope" value="Bacteria"/>
</dbReference>
<dbReference type="HOGENOM" id="CLU_061463_3_2_0"/>
<dbReference type="OrthoDB" id="9813334at2"/>
<dbReference type="Proteomes" id="UP000001366">
    <property type="component" value="Chromosome"/>
</dbReference>
<dbReference type="GO" id="GO:0005737">
    <property type="term" value="C:cytoplasm"/>
    <property type="evidence" value="ECO:0007669"/>
    <property type="project" value="UniProtKB-ARBA"/>
</dbReference>
<dbReference type="GO" id="GO:1990904">
    <property type="term" value="C:ribonucleoprotein complex"/>
    <property type="evidence" value="ECO:0007669"/>
    <property type="project" value="UniProtKB-KW"/>
</dbReference>
<dbReference type="GO" id="GO:0005840">
    <property type="term" value="C:ribosome"/>
    <property type="evidence" value="ECO:0007669"/>
    <property type="project" value="UniProtKB-KW"/>
</dbReference>
<dbReference type="GO" id="GO:0019843">
    <property type="term" value="F:rRNA binding"/>
    <property type="evidence" value="ECO:0007669"/>
    <property type="project" value="UniProtKB-UniRule"/>
</dbReference>
<dbReference type="GO" id="GO:0003735">
    <property type="term" value="F:structural constituent of ribosome"/>
    <property type="evidence" value="ECO:0007669"/>
    <property type="project" value="InterPro"/>
</dbReference>
<dbReference type="GO" id="GO:0006412">
    <property type="term" value="P:translation"/>
    <property type="evidence" value="ECO:0007669"/>
    <property type="project" value="UniProtKB-UniRule"/>
</dbReference>
<dbReference type="HAMAP" id="MF_01363">
    <property type="entry name" value="Ribosomal_bL21"/>
    <property type="match status" value="1"/>
</dbReference>
<dbReference type="InterPro" id="IPR028909">
    <property type="entry name" value="bL21-like"/>
</dbReference>
<dbReference type="InterPro" id="IPR036164">
    <property type="entry name" value="bL21-like_sf"/>
</dbReference>
<dbReference type="InterPro" id="IPR001787">
    <property type="entry name" value="Ribosomal_bL21"/>
</dbReference>
<dbReference type="NCBIfam" id="TIGR00061">
    <property type="entry name" value="L21"/>
    <property type="match status" value="1"/>
</dbReference>
<dbReference type="PANTHER" id="PTHR21349">
    <property type="entry name" value="50S RIBOSOMAL PROTEIN L21"/>
    <property type="match status" value="1"/>
</dbReference>
<dbReference type="PANTHER" id="PTHR21349:SF0">
    <property type="entry name" value="LARGE RIBOSOMAL SUBUNIT PROTEIN BL21M"/>
    <property type="match status" value="1"/>
</dbReference>
<dbReference type="Pfam" id="PF00829">
    <property type="entry name" value="Ribosomal_L21p"/>
    <property type="match status" value="1"/>
</dbReference>
<dbReference type="SUPFAM" id="SSF141091">
    <property type="entry name" value="L21p-like"/>
    <property type="match status" value="1"/>
</dbReference>
<evidence type="ECO:0000255" key="1">
    <source>
        <dbReference type="HAMAP-Rule" id="MF_01363"/>
    </source>
</evidence>
<evidence type="ECO:0000305" key="2"/>
<keyword id="KW-1185">Reference proteome</keyword>
<keyword id="KW-0687">Ribonucleoprotein</keyword>
<keyword id="KW-0689">Ribosomal protein</keyword>
<keyword id="KW-0694">RNA-binding</keyword>
<keyword id="KW-0699">rRNA-binding</keyword>
<protein>
    <recommendedName>
        <fullName evidence="1">Large ribosomal subunit protein bL21</fullName>
    </recommendedName>
    <alternativeName>
        <fullName evidence="2">50S ribosomal protein L21</fullName>
    </alternativeName>
</protein>